<keyword id="KW-0025">Alternative splicing</keyword>
<keyword id="KW-0131">Cell cycle</keyword>
<keyword id="KW-0966">Cell projection</keyword>
<keyword id="KW-0963">Cytoplasm</keyword>
<keyword id="KW-0206">Cytoskeleton</keyword>
<keyword id="KW-0217">Developmental protein</keyword>
<keyword id="KW-0221">Differentiation</keyword>
<keyword id="KW-0238">DNA-binding</keyword>
<keyword id="KW-0539">Nucleus</keyword>
<keyword id="KW-0597">Phosphoprotein</keyword>
<keyword id="KW-1185">Reference proteome</keyword>
<comment type="function">
    <text evidence="1">Involved in lineage commitment of primary hemopoietic progenitors by restricting erythroid formation and enhancing myeloid formation. Interferes with erythropoietin-induced erythroid terminal differentiation by preventing cells from exiting the cell cycle through suppression of CDKN1B/p27Kip1 levels. Suppresses COP1 activity via CSN3 which activates p53 and induces cell cycle arrest. Binds DNA and affects the expression of a number of genes so may function as a transcription factor in the nucleus (By similarity).</text>
</comment>
<comment type="subunit">
    <text evidence="1">Interacts with CENPU. Also interacts with NRBP1/MADM, YWHAZ/14-3-3-zeta and HNRPUL2/MANP. NRBP1 recruits a serine kinase which phosphorylates both itself and MLF1. Phosphorylated MLF1 then binds to YWHAZ and is retained in the cytoplasm. Retained in the nucleus by binding to HNRPUL2. Binds to COPS3/CSN3 which is required for suppression of COP1 and activation of p53 (By similarity).</text>
</comment>
<comment type="subcellular location">
    <subcellularLocation>
        <location evidence="3">Cytoplasm</location>
    </subcellularLocation>
    <subcellularLocation>
        <location evidence="3">Nucleus</location>
    </subcellularLocation>
    <subcellularLocation>
        <location evidence="3">Cell projection</location>
        <location evidence="3">Cilium</location>
    </subcellularLocation>
    <subcellularLocation>
        <location evidence="3">Cytoplasm</location>
        <location evidence="3">Cytoskeleton</location>
        <location evidence="3">Cilium basal body</location>
    </subcellularLocation>
    <text evidence="3">Shuttles between the cytoplasm and nucleus.</text>
</comment>
<comment type="alternative products">
    <event type="alternative splicing"/>
    <isoform>
        <id>Q5R4T3-1</id>
        <name>1</name>
        <sequence type="displayed"/>
    </isoform>
    <isoform>
        <id>Q5R4T3-2</id>
        <name>2</name>
        <sequence type="described" ref="VSP_020021"/>
    </isoform>
</comment>
<comment type="PTM">
    <text evidence="1">Phosphorylation is required for binding to YWHAZ.</text>
</comment>
<comment type="similarity">
    <text evidence="6">Belongs to the MLF family.</text>
</comment>
<sequence length="268" mass="30667">MFRMLSSSFEDDPFFSESILAHRENMRQMMRSFTEPFGRDLLSISDGRGRVHNRRGHNDGEDSLTHTDVSSLQTVDQMVSNMRNYMQKLERNFGQLSVDPNGHSFCSSSVMTYSKIGDEPPKVFQASTQTRRAPGGIKETRKAMRDSDSGLEKMAIGHHIHDRAHVIKKSKNKKTGDEEVNQEFINMNESDAHAFDEEWQSEVLKYKPGRHNLENTRMRSVGHENPGSRELKRREKPQQSPAIEHGRRSDVLGDKLHIKGSSVKSNKK</sequence>
<protein>
    <recommendedName>
        <fullName>Myeloid leukemia factor 1</fullName>
    </recommendedName>
    <alternativeName>
        <fullName>Myelodysplasia-myeloid leukemia factor 1</fullName>
    </alternativeName>
</protein>
<dbReference type="EMBL" id="CR860009">
    <property type="protein sequence ID" value="CAH92160.1"/>
    <property type="molecule type" value="mRNA"/>
</dbReference>
<dbReference type="EMBL" id="CR861160">
    <property type="protein sequence ID" value="CAH93233.1"/>
    <property type="molecule type" value="mRNA"/>
</dbReference>
<dbReference type="RefSeq" id="NP_001127516.1">
    <molecule id="Q5R4T3-1"/>
    <property type="nucleotide sequence ID" value="NM_001134044.1"/>
</dbReference>
<dbReference type="FunCoup" id="Q5R4T3">
    <property type="interactions" value="611"/>
</dbReference>
<dbReference type="STRING" id="9601.ENSPPYP00000015924"/>
<dbReference type="GeneID" id="100174592"/>
<dbReference type="KEGG" id="pon:100174592"/>
<dbReference type="CTD" id="4291"/>
<dbReference type="eggNOG" id="KOG4049">
    <property type="taxonomic scope" value="Eukaryota"/>
</dbReference>
<dbReference type="InParanoid" id="Q5R4T3"/>
<dbReference type="OrthoDB" id="8707547at2759"/>
<dbReference type="Proteomes" id="UP000001595">
    <property type="component" value="Unplaced"/>
</dbReference>
<dbReference type="GO" id="GO:0036064">
    <property type="term" value="C:ciliary basal body"/>
    <property type="evidence" value="ECO:0000250"/>
    <property type="project" value="UniProtKB"/>
</dbReference>
<dbReference type="GO" id="GO:0005929">
    <property type="term" value="C:cilium"/>
    <property type="evidence" value="ECO:0000250"/>
    <property type="project" value="UniProtKB"/>
</dbReference>
<dbReference type="GO" id="GO:0005737">
    <property type="term" value="C:cytoplasm"/>
    <property type="evidence" value="ECO:0000250"/>
    <property type="project" value="UniProtKB"/>
</dbReference>
<dbReference type="GO" id="GO:0005634">
    <property type="term" value="C:nucleus"/>
    <property type="evidence" value="ECO:0000250"/>
    <property type="project" value="UniProtKB"/>
</dbReference>
<dbReference type="GO" id="GO:0003677">
    <property type="term" value="F:DNA binding"/>
    <property type="evidence" value="ECO:0000250"/>
    <property type="project" value="UniProtKB"/>
</dbReference>
<dbReference type="GO" id="GO:0006351">
    <property type="term" value="P:DNA-templated transcription"/>
    <property type="evidence" value="ECO:0000250"/>
    <property type="project" value="UniProtKB"/>
</dbReference>
<dbReference type="GO" id="GO:0002318">
    <property type="term" value="P:myeloid progenitor cell differentiation"/>
    <property type="evidence" value="ECO:0000250"/>
    <property type="project" value="UniProtKB"/>
</dbReference>
<dbReference type="GO" id="GO:1902806">
    <property type="term" value="P:regulation of cell cycle G1/S phase transition"/>
    <property type="evidence" value="ECO:0000250"/>
    <property type="project" value="UniProtKB"/>
</dbReference>
<dbReference type="InterPro" id="IPR019376">
    <property type="entry name" value="Myeloid_leukemia_factor"/>
</dbReference>
<dbReference type="PANTHER" id="PTHR13105">
    <property type="entry name" value="MYELOID LEUKEMIA FACTOR"/>
    <property type="match status" value="1"/>
</dbReference>
<dbReference type="Pfam" id="PF10248">
    <property type="entry name" value="Mlf1IP"/>
    <property type="match status" value="1"/>
</dbReference>
<organism>
    <name type="scientific">Pongo abelii</name>
    <name type="common">Sumatran orangutan</name>
    <name type="synonym">Pongo pygmaeus abelii</name>
    <dbReference type="NCBI Taxonomy" id="9601"/>
    <lineage>
        <taxon>Eukaryota</taxon>
        <taxon>Metazoa</taxon>
        <taxon>Chordata</taxon>
        <taxon>Craniata</taxon>
        <taxon>Vertebrata</taxon>
        <taxon>Euteleostomi</taxon>
        <taxon>Mammalia</taxon>
        <taxon>Eutheria</taxon>
        <taxon>Euarchontoglires</taxon>
        <taxon>Primates</taxon>
        <taxon>Haplorrhini</taxon>
        <taxon>Catarrhini</taxon>
        <taxon>Hominidae</taxon>
        <taxon>Pongo</taxon>
    </lineage>
</organism>
<feature type="chain" id="PRO_0000247599" description="Myeloid leukemia factor 1">
    <location>
        <begin position="1"/>
        <end position="268"/>
    </location>
</feature>
<feature type="region of interest" description="Interaction with COPS3" evidence="1">
    <location>
        <begin position="50"/>
        <end position="125"/>
    </location>
</feature>
<feature type="region of interest" description="Disordered" evidence="4">
    <location>
        <begin position="208"/>
        <end position="268"/>
    </location>
</feature>
<feature type="compositionally biased region" description="Basic and acidic residues" evidence="4">
    <location>
        <begin position="226"/>
        <end position="237"/>
    </location>
</feature>
<feature type="compositionally biased region" description="Basic and acidic residues" evidence="4">
    <location>
        <begin position="244"/>
        <end position="257"/>
    </location>
</feature>
<feature type="modified residue" description="Phosphoserine" evidence="3">
    <location>
        <position position="6"/>
    </location>
</feature>
<feature type="modified residue" description="Phosphoserine" evidence="2">
    <location>
        <position position="8"/>
    </location>
</feature>
<feature type="modified residue" description="Phosphoserine" evidence="2">
    <location>
        <position position="32"/>
    </location>
</feature>
<feature type="splice variant" id="VSP_020021" description="In isoform 2." evidence="5">
    <location>
        <begin position="1"/>
        <end position="110"/>
    </location>
</feature>
<feature type="sequence conflict" description="In Ref. 1; CAH92160." evidence="6" ref="1">
    <original>H</original>
    <variation>Y</variation>
    <location>
        <position position="257"/>
    </location>
</feature>
<evidence type="ECO:0000250" key="1"/>
<evidence type="ECO:0000250" key="2">
    <source>
        <dbReference type="UniProtKB" id="P58340"/>
    </source>
</evidence>
<evidence type="ECO:0000250" key="3">
    <source>
        <dbReference type="UniProtKB" id="Q9QWV4"/>
    </source>
</evidence>
<evidence type="ECO:0000256" key="4">
    <source>
        <dbReference type="SAM" id="MobiDB-lite"/>
    </source>
</evidence>
<evidence type="ECO:0000303" key="5">
    <source ref="1"/>
</evidence>
<evidence type="ECO:0000305" key="6"/>
<reference key="1">
    <citation type="submission" date="2004-11" db="EMBL/GenBank/DDBJ databases">
        <authorList>
            <consortium name="The German cDNA consortium"/>
        </authorList>
    </citation>
    <scope>NUCLEOTIDE SEQUENCE [LARGE SCALE MRNA] (ISOFORMS 1 AND 2)</scope>
    <source>
        <tissue>Brain cortex</tissue>
    </source>
</reference>
<accession>Q5R4T3</accession>
<accession>Q5R7V0</accession>
<gene>
    <name type="primary">MLF1</name>
</gene>
<proteinExistence type="evidence at transcript level"/>
<name>MLF1_PONAB</name>